<proteinExistence type="inferred from homology"/>
<evidence type="ECO:0000255" key="1">
    <source>
        <dbReference type="HAMAP-Rule" id="MF_00046"/>
    </source>
</evidence>
<protein>
    <recommendedName>
        <fullName evidence="1">UDP-N-acetylmuramate--L-alanine ligase</fullName>
        <ecNumber evidence="1">6.3.2.8</ecNumber>
    </recommendedName>
    <alternativeName>
        <fullName evidence="1">UDP-N-acetylmuramoyl-L-alanine synthetase</fullName>
    </alternativeName>
</protein>
<keyword id="KW-0067">ATP-binding</keyword>
<keyword id="KW-0131">Cell cycle</keyword>
<keyword id="KW-0132">Cell division</keyword>
<keyword id="KW-0133">Cell shape</keyword>
<keyword id="KW-0961">Cell wall biogenesis/degradation</keyword>
<keyword id="KW-0963">Cytoplasm</keyword>
<keyword id="KW-0436">Ligase</keyword>
<keyword id="KW-0547">Nucleotide-binding</keyword>
<keyword id="KW-0573">Peptidoglycan synthesis</keyword>
<keyword id="KW-1185">Reference proteome</keyword>
<gene>
    <name evidence="1" type="primary">murC</name>
    <name type="ordered locus">Plav_2422</name>
</gene>
<name>MURC_PARL1</name>
<sequence>MRPAPLDIGNIHFVGIGGIGMSGIAEVMHNLGYTVQGSDLADSANVKRLKGLGIKVFIGQKAENLAEAQVIVVSSAIRADNPELMEARARFLPVVRRAEMLAELMRLKSCVAIGGTHGKTTTTSLVAAILDKAGLDPTVINGGIINAYGTNARLGGGEWMVVEADESDGTFVKLPATIAIVTNIDPEHLDYYGSFDAAKDAFLAFVENVPFYGAAVMCIDHPEVQALIGRVRDRRIVTYGTNPQADIRATNARVEDGFNVFDVAITDRKTGTAREMTGVRLAMHGTHNMLNSLAAIGVATQMGIADDKIRAALEGFGGVKRRFTFVGSWNDVNIYDDYGHHPVEIAAVLQAARSATKGRTIAVVQPHRYTRLHNLFDEFCACFNDADAVIVADVYEAGEKPIEGASRDALVEGLRDRGHRNVMALDGPEALPRLIAETARPGDLVVCLGAGSITYWANALPDDLAKLGGKKKAAAKSAAKTKAKPKKGRGK</sequence>
<comment type="function">
    <text evidence="1">Cell wall formation.</text>
</comment>
<comment type="catalytic activity">
    <reaction evidence="1">
        <text>UDP-N-acetyl-alpha-D-muramate + L-alanine + ATP = UDP-N-acetyl-alpha-D-muramoyl-L-alanine + ADP + phosphate + H(+)</text>
        <dbReference type="Rhea" id="RHEA:23372"/>
        <dbReference type="ChEBI" id="CHEBI:15378"/>
        <dbReference type="ChEBI" id="CHEBI:30616"/>
        <dbReference type="ChEBI" id="CHEBI:43474"/>
        <dbReference type="ChEBI" id="CHEBI:57972"/>
        <dbReference type="ChEBI" id="CHEBI:70757"/>
        <dbReference type="ChEBI" id="CHEBI:83898"/>
        <dbReference type="ChEBI" id="CHEBI:456216"/>
        <dbReference type="EC" id="6.3.2.8"/>
    </reaction>
</comment>
<comment type="pathway">
    <text evidence="1">Cell wall biogenesis; peptidoglycan biosynthesis.</text>
</comment>
<comment type="subcellular location">
    <subcellularLocation>
        <location evidence="1">Cytoplasm</location>
    </subcellularLocation>
</comment>
<comment type="similarity">
    <text evidence="1">Belongs to the MurCDEF family.</text>
</comment>
<accession>A7HVU8</accession>
<feature type="chain" id="PRO_1000071097" description="UDP-N-acetylmuramate--L-alanine ligase">
    <location>
        <begin position="1"/>
        <end position="491"/>
    </location>
</feature>
<feature type="binding site" evidence="1">
    <location>
        <begin position="115"/>
        <end position="121"/>
    </location>
    <ligand>
        <name>ATP</name>
        <dbReference type="ChEBI" id="CHEBI:30616"/>
    </ligand>
</feature>
<dbReference type="EC" id="6.3.2.8" evidence="1"/>
<dbReference type="EMBL" id="CP000774">
    <property type="protein sequence ID" value="ABS64031.1"/>
    <property type="molecule type" value="Genomic_DNA"/>
</dbReference>
<dbReference type="RefSeq" id="WP_012111340.1">
    <property type="nucleotide sequence ID" value="NC_009719.1"/>
</dbReference>
<dbReference type="SMR" id="A7HVU8"/>
<dbReference type="STRING" id="402881.Plav_2422"/>
<dbReference type="KEGG" id="pla:Plav_2422"/>
<dbReference type="eggNOG" id="COG0773">
    <property type="taxonomic scope" value="Bacteria"/>
</dbReference>
<dbReference type="HOGENOM" id="CLU_028104_2_2_5"/>
<dbReference type="OrthoDB" id="9804126at2"/>
<dbReference type="UniPathway" id="UPA00219"/>
<dbReference type="Proteomes" id="UP000006377">
    <property type="component" value="Chromosome"/>
</dbReference>
<dbReference type="GO" id="GO:0005737">
    <property type="term" value="C:cytoplasm"/>
    <property type="evidence" value="ECO:0007669"/>
    <property type="project" value="UniProtKB-SubCell"/>
</dbReference>
<dbReference type="GO" id="GO:0005524">
    <property type="term" value="F:ATP binding"/>
    <property type="evidence" value="ECO:0007669"/>
    <property type="project" value="UniProtKB-UniRule"/>
</dbReference>
<dbReference type="GO" id="GO:0008763">
    <property type="term" value="F:UDP-N-acetylmuramate-L-alanine ligase activity"/>
    <property type="evidence" value="ECO:0007669"/>
    <property type="project" value="UniProtKB-UniRule"/>
</dbReference>
<dbReference type="GO" id="GO:0051301">
    <property type="term" value="P:cell division"/>
    <property type="evidence" value="ECO:0007669"/>
    <property type="project" value="UniProtKB-KW"/>
</dbReference>
<dbReference type="GO" id="GO:0071555">
    <property type="term" value="P:cell wall organization"/>
    <property type="evidence" value="ECO:0007669"/>
    <property type="project" value="UniProtKB-KW"/>
</dbReference>
<dbReference type="GO" id="GO:0009252">
    <property type="term" value="P:peptidoglycan biosynthetic process"/>
    <property type="evidence" value="ECO:0007669"/>
    <property type="project" value="UniProtKB-UniRule"/>
</dbReference>
<dbReference type="GO" id="GO:0008360">
    <property type="term" value="P:regulation of cell shape"/>
    <property type="evidence" value="ECO:0007669"/>
    <property type="project" value="UniProtKB-KW"/>
</dbReference>
<dbReference type="Gene3D" id="3.90.190.20">
    <property type="entry name" value="Mur ligase, C-terminal domain"/>
    <property type="match status" value="1"/>
</dbReference>
<dbReference type="Gene3D" id="3.40.1190.10">
    <property type="entry name" value="Mur-like, catalytic domain"/>
    <property type="match status" value="1"/>
</dbReference>
<dbReference type="Gene3D" id="3.40.50.720">
    <property type="entry name" value="NAD(P)-binding Rossmann-like Domain"/>
    <property type="match status" value="1"/>
</dbReference>
<dbReference type="HAMAP" id="MF_00046">
    <property type="entry name" value="MurC"/>
    <property type="match status" value="1"/>
</dbReference>
<dbReference type="InterPro" id="IPR036565">
    <property type="entry name" value="Mur-like_cat_sf"/>
</dbReference>
<dbReference type="InterPro" id="IPR004101">
    <property type="entry name" value="Mur_ligase_C"/>
</dbReference>
<dbReference type="InterPro" id="IPR036615">
    <property type="entry name" value="Mur_ligase_C_dom_sf"/>
</dbReference>
<dbReference type="InterPro" id="IPR013221">
    <property type="entry name" value="Mur_ligase_cen"/>
</dbReference>
<dbReference type="InterPro" id="IPR000713">
    <property type="entry name" value="Mur_ligase_N"/>
</dbReference>
<dbReference type="InterPro" id="IPR050061">
    <property type="entry name" value="MurCDEF_pg_biosynth"/>
</dbReference>
<dbReference type="InterPro" id="IPR005758">
    <property type="entry name" value="UDP-N-AcMur_Ala_ligase_MurC"/>
</dbReference>
<dbReference type="NCBIfam" id="TIGR01082">
    <property type="entry name" value="murC"/>
    <property type="match status" value="1"/>
</dbReference>
<dbReference type="PANTHER" id="PTHR43445:SF3">
    <property type="entry name" value="UDP-N-ACETYLMURAMATE--L-ALANINE LIGASE"/>
    <property type="match status" value="1"/>
</dbReference>
<dbReference type="PANTHER" id="PTHR43445">
    <property type="entry name" value="UDP-N-ACETYLMURAMATE--L-ALANINE LIGASE-RELATED"/>
    <property type="match status" value="1"/>
</dbReference>
<dbReference type="Pfam" id="PF01225">
    <property type="entry name" value="Mur_ligase"/>
    <property type="match status" value="1"/>
</dbReference>
<dbReference type="Pfam" id="PF02875">
    <property type="entry name" value="Mur_ligase_C"/>
    <property type="match status" value="1"/>
</dbReference>
<dbReference type="Pfam" id="PF08245">
    <property type="entry name" value="Mur_ligase_M"/>
    <property type="match status" value="1"/>
</dbReference>
<dbReference type="SUPFAM" id="SSF51984">
    <property type="entry name" value="MurCD N-terminal domain"/>
    <property type="match status" value="1"/>
</dbReference>
<dbReference type="SUPFAM" id="SSF53623">
    <property type="entry name" value="MurD-like peptide ligases, catalytic domain"/>
    <property type="match status" value="1"/>
</dbReference>
<dbReference type="SUPFAM" id="SSF53244">
    <property type="entry name" value="MurD-like peptide ligases, peptide-binding domain"/>
    <property type="match status" value="1"/>
</dbReference>
<organism>
    <name type="scientific">Parvibaculum lavamentivorans (strain DS-1 / DSM 13023 / NCIMB 13966)</name>
    <dbReference type="NCBI Taxonomy" id="402881"/>
    <lineage>
        <taxon>Bacteria</taxon>
        <taxon>Pseudomonadati</taxon>
        <taxon>Pseudomonadota</taxon>
        <taxon>Alphaproteobacteria</taxon>
        <taxon>Hyphomicrobiales</taxon>
        <taxon>Parvibaculaceae</taxon>
        <taxon>Parvibaculum</taxon>
    </lineage>
</organism>
<reference key="1">
    <citation type="journal article" date="2011" name="Stand. Genomic Sci.">
        <title>Complete genome sequence of Parvibaculum lavamentivorans type strain (DS-1(T)).</title>
        <authorList>
            <person name="Schleheck D."/>
            <person name="Weiss M."/>
            <person name="Pitluck S."/>
            <person name="Bruce D."/>
            <person name="Land M.L."/>
            <person name="Han S."/>
            <person name="Saunders E."/>
            <person name="Tapia R."/>
            <person name="Detter C."/>
            <person name="Brettin T."/>
            <person name="Han J."/>
            <person name="Woyke T."/>
            <person name="Goodwin L."/>
            <person name="Pennacchio L."/>
            <person name="Nolan M."/>
            <person name="Cook A.M."/>
            <person name="Kjelleberg S."/>
            <person name="Thomas T."/>
        </authorList>
    </citation>
    <scope>NUCLEOTIDE SEQUENCE [LARGE SCALE GENOMIC DNA]</scope>
    <source>
        <strain>DS-1 / DSM 13023 / NCIMB 13966</strain>
    </source>
</reference>